<sequence>KESAAAKFZRZHMBSSTSSASSSNYCNQMMKSRNLTQDRCKPVNTFVHESLADVQAVCSQKNVQCKNGQTNCYQSYSTMSITDCRETGSSKYPNCAYKTTQAQKHIIVACEGNPYVPVHFDASV</sequence>
<accession>P07848</accession>
<reference key="1">
    <citation type="journal article" date="1980" name="Biochim. Biophys. Acta">
        <title>Primary structures of pancreatic ribonucleases from Bovidae. Impala, Thomson's gazelle, nilgai and water buffalo.</title>
        <authorList>
            <person name="Beintema J.J."/>
        </authorList>
    </citation>
    <scope>PROTEIN SEQUENCE</scope>
</reference>
<gene>
    <name type="primary">RNASE1</name>
    <name type="synonym">RNS1</name>
</gene>
<proteinExistence type="evidence at protein level"/>
<protein>
    <recommendedName>
        <fullName>Ribonuclease pancreatic</fullName>
        <ecNumber>4.6.1.18</ecNumber>
    </recommendedName>
    <alternativeName>
        <fullName>RNase 1</fullName>
    </alternativeName>
    <alternativeName>
        <fullName>RNase A</fullName>
    </alternativeName>
</protein>
<evidence type="ECO:0000250" key="1"/>
<evidence type="ECO:0000255" key="2"/>
<evidence type="ECO:0000305" key="3"/>
<keyword id="KW-0903">Direct protein sequencing</keyword>
<keyword id="KW-1015">Disulfide bond</keyword>
<keyword id="KW-0255">Endonuclease</keyword>
<keyword id="KW-0325">Glycoprotein</keyword>
<keyword id="KW-0378">Hydrolase</keyword>
<keyword id="KW-0456">Lyase</keyword>
<keyword id="KW-0540">Nuclease</keyword>
<keyword id="KW-0964">Secreted</keyword>
<comment type="function">
    <text evidence="1">Endonuclease that catalyzes the cleavage of RNA on the 3' side of pyrimidine nucleotides. Acts on single-stranded and double-stranded RNA (By similarity).</text>
</comment>
<comment type="catalytic activity">
    <reaction>
        <text>an [RNA] containing cytidine + H2O = an [RNA]-3'-cytidine-3'-phosphate + a 5'-hydroxy-ribonucleotide-3'-[RNA].</text>
        <dbReference type="EC" id="4.6.1.18"/>
    </reaction>
</comment>
<comment type="catalytic activity">
    <reaction>
        <text>an [RNA] containing uridine + H2O = an [RNA]-3'-uridine-3'-phosphate + a 5'-hydroxy-ribonucleotide-3'-[RNA].</text>
        <dbReference type="EC" id="4.6.1.18"/>
    </reaction>
</comment>
<comment type="subunit">
    <text evidence="1">Monomer. Interacts with and forms tight 1:1 complexes with RNH1. Dimerization of two such complexes may occur. Interaction with RNH1 inhibits this protein (By similarity).</text>
</comment>
<comment type="subcellular location">
    <subcellularLocation>
        <location>Secreted</location>
    </subcellularLocation>
</comment>
<comment type="tissue specificity">
    <text>Pancreas.</text>
</comment>
<comment type="similarity">
    <text evidence="3">Belongs to the pancreatic ribonuclease family.</text>
</comment>
<dbReference type="EC" id="4.6.1.18"/>
<dbReference type="PIR" id="S08546">
    <property type="entry name" value="S08546"/>
</dbReference>
<dbReference type="GlyCosmos" id="P07848">
    <property type="glycosylation" value="1 site, No reported glycans"/>
</dbReference>
<dbReference type="GO" id="GO:0005576">
    <property type="term" value="C:extracellular region"/>
    <property type="evidence" value="ECO:0007669"/>
    <property type="project" value="UniProtKB-SubCell"/>
</dbReference>
<dbReference type="GO" id="GO:0016829">
    <property type="term" value="F:lyase activity"/>
    <property type="evidence" value="ECO:0007669"/>
    <property type="project" value="UniProtKB-KW"/>
</dbReference>
<dbReference type="GO" id="GO:0003676">
    <property type="term" value="F:nucleic acid binding"/>
    <property type="evidence" value="ECO:0007669"/>
    <property type="project" value="InterPro"/>
</dbReference>
<dbReference type="GO" id="GO:0004522">
    <property type="term" value="F:ribonuclease A activity"/>
    <property type="evidence" value="ECO:0007669"/>
    <property type="project" value="UniProtKB-EC"/>
</dbReference>
<dbReference type="GO" id="GO:0050830">
    <property type="term" value="P:defense response to Gram-positive bacterium"/>
    <property type="evidence" value="ECO:0007669"/>
    <property type="project" value="TreeGrafter"/>
</dbReference>
<dbReference type="CDD" id="cd06265">
    <property type="entry name" value="RNase_A_canonical"/>
    <property type="match status" value="1"/>
</dbReference>
<dbReference type="FunFam" id="3.10.130.10:FF:000001">
    <property type="entry name" value="Ribonuclease pancreatic"/>
    <property type="match status" value="1"/>
</dbReference>
<dbReference type="Gene3D" id="3.10.130.10">
    <property type="entry name" value="Ribonuclease A-like domain"/>
    <property type="match status" value="1"/>
</dbReference>
<dbReference type="InterPro" id="IPR001427">
    <property type="entry name" value="RNaseA"/>
</dbReference>
<dbReference type="InterPro" id="IPR036816">
    <property type="entry name" value="RNaseA-like_dom_sf"/>
</dbReference>
<dbReference type="InterPro" id="IPR023411">
    <property type="entry name" value="RNaseA_AS"/>
</dbReference>
<dbReference type="InterPro" id="IPR023412">
    <property type="entry name" value="RNaseA_domain"/>
</dbReference>
<dbReference type="PANTHER" id="PTHR11437">
    <property type="entry name" value="RIBONUCLEASE"/>
    <property type="match status" value="1"/>
</dbReference>
<dbReference type="PANTHER" id="PTHR11437:SF24">
    <property type="entry name" value="RIBONUCLEASE PANCREATIC"/>
    <property type="match status" value="1"/>
</dbReference>
<dbReference type="Pfam" id="PF00074">
    <property type="entry name" value="RnaseA"/>
    <property type="match status" value="1"/>
</dbReference>
<dbReference type="PRINTS" id="PR00794">
    <property type="entry name" value="RIBONUCLEASE"/>
</dbReference>
<dbReference type="SMART" id="SM00092">
    <property type="entry name" value="RNAse_Pc"/>
    <property type="match status" value="1"/>
</dbReference>
<dbReference type="SUPFAM" id="SSF54076">
    <property type="entry name" value="RNase A-like"/>
    <property type="match status" value="1"/>
</dbReference>
<dbReference type="PROSITE" id="PS00127">
    <property type="entry name" value="RNASE_PANCREATIC"/>
    <property type="match status" value="1"/>
</dbReference>
<organism>
    <name type="scientific">Eudorcas thomsonii</name>
    <name type="common">Thomson's gazelle</name>
    <name type="synonym">Gazella thomsonii</name>
    <dbReference type="NCBI Taxonomy" id="69308"/>
    <lineage>
        <taxon>Eukaryota</taxon>
        <taxon>Metazoa</taxon>
        <taxon>Chordata</taxon>
        <taxon>Craniata</taxon>
        <taxon>Vertebrata</taxon>
        <taxon>Euteleostomi</taxon>
        <taxon>Mammalia</taxon>
        <taxon>Eutheria</taxon>
        <taxon>Laurasiatheria</taxon>
        <taxon>Artiodactyla</taxon>
        <taxon>Ruminantia</taxon>
        <taxon>Pecora</taxon>
        <taxon>Bovidae</taxon>
        <taxon>Antilopinae</taxon>
        <taxon>Eudorcas</taxon>
    </lineage>
</organism>
<name>RNAS1_EUDTH</name>
<feature type="chain" id="PRO_0000057197" description="Ribonuclease pancreatic">
    <location>
        <begin position="1"/>
        <end position="124"/>
    </location>
</feature>
<feature type="active site" description="Proton acceptor" evidence="1">
    <location>
        <position position="12"/>
    </location>
</feature>
<feature type="active site" description="Proton donor" evidence="1">
    <location>
        <position position="119"/>
    </location>
</feature>
<feature type="binding site" evidence="1">
    <location>
        <position position="7"/>
    </location>
    <ligand>
        <name>substrate</name>
    </ligand>
</feature>
<feature type="binding site" evidence="1">
    <location>
        <position position="10"/>
    </location>
    <ligand>
        <name>substrate</name>
    </ligand>
</feature>
<feature type="binding site" evidence="1">
    <location>
        <begin position="41"/>
        <end position="45"/>
    </location>
    <ligand>
        <name>substrate</name>
    </ligand>
</feature>
<feature type="binding site" evidence="1">
    <location>
        <position position="66"/>
    </location>
    <ligand>
        <name>substrate</name>
    </ligand>
</feature>
<feature type="binding site" evidence="1">
    <location>
        <position position="85"/>
    </location>
    <ligand>
        <name>substrate</name>
    </ligand>
</feature>
<feature type="glycosylation site" description="N-linked (GlcNAc...) asparagine" evidence="2">
    <location>
        <position position="34"/>
    </location>
</feature>
<feature type="disulfide bond" evidence="1">
    <location>
        <begin position="26"/>
        <end position="84"/>
    </location>
</feature>
<feature type="disulfide bond" evidence="1">
    <location>
        <begin position="40"/>
        <end position="95"/>
    </location>
</feature>
<feature type="disulfide bond" evidence="1">
    <location>
        <begin position="58"/>
        <end position="110"/>
    </location>
</feature>
<feature type="disulfide bond" evidence="1">
    <location>
        <begin position="65"/>
        <end position="72"/>
    </location>
</feature>